<feature type="transit peptide" description="Mitochondrion" evidence="1">
    <location>
        <begin position="1"/>
        <end position="43"/>
    </location>
</feature>
<feature type="chain" id="PRO_0000402875" description="Translation factor guf1, mitochondrial">
    <location>
        <begin position="44"/>
        <end position="664"/>
    </location>
</feature>
<feature type="domain" description="tr-type G">
    <location>
        <begin position="66"/>
        <end position="246"/>
    </location>
</feature>
<feature type="binding site" evidence="1">
    <location>
        <begin position="75"/>
        <end position="82"/>
    </location>
    <ligand>
        <name>GTP</name>
        <dbReference type="ChEBI" id="CHEBI:37565"/>
    </ligand>
</feature>
<feature type="binding site" evidence="1">
    <location>
        <begin position="139"/>
        <end position="143"/>
    </location>
    <ligand>
        <name>GTP</name>
        <dbReference type="ChEBI" id="CHEBI:37565"/>
    </ligand>
</feature>
<feature type="binding site" evidence="1">
    <location>
        <begin position="193"/>
        <end position="196"/>
    </location>
    <ligand>
        <name>GTP</name>
        <dbReference type="ChEBI" id="CHEBI:37565"/>
    </ligand>
</feature>
<comment type="function">
    <text evidence="1">Promotes mitochondrial protein synthesis. May act as a fidelity factor of the translation reaction, by catalyzing a one-codon backward translocation of tRNAs on improperly translocated ribosomes. Binds to mitochondrial ribosomes in a GTP-dependent manner.</text>
</comment>
<comment type="catalytic activity">
    <reaction evidence="1">
        <text>GTP + H2O = GDP + phosphate + H(+)</text>
        <dbReference type="Rhea" id="RHEA:19669"/>
        <dbReference type="ChEBI" id="CHEBI:15377"/>
        <dbReference type="ChEBI" id="CHEBI:15378"/>
        <dbReference type="ChEBI" id="CHEBI:37565"/>
        <dbReference type="ChEBI" id="CHEBI:43474"/>
        <dbReference type="ChEBI" id="CHEBI:58189"/>
    </reaction>
</comment>
<comment type="subcellular location">
    <subcellularLocation>
        <location evidence="1">Mitochondrion inner membrane</location>
        <topology evidence="1">Peripheral membrane protein</topology>
        <orientation evidence="1">Matrix side</orientation>
    </subcellularLocation>
</comment>
<comment type="similarity">
    <text evidence="2">Belongs to the TRAFAC class translation factor GTPase superfamily. Classic translation factor GTPase family. LepA subfamily.</text>
</comment>
<protein>
    <recommendedName>
        <fullName evidence="1">Translation factor guf1, mitochondrial</fullName>
        <ecNumber>3.6.5.-</ecNumber>
    </recommendedName>
    <alternativeName>
        <fullName evidence="1">Elongation factor 4 homolog</fullName>
        <shortName evidence="1">EF-4</shortName>
    </alternativeName>
    <alternativeName>
        <fullName evidence="1">GTPase guf1</fullName>
    </alternativeName>
    <alternativeName>
        <fullName evidence="1">Ribosomal back-translocase</fullName>
    </alternativeName>
</protein>
<dbReference type="EC" id="3.6.5.-"/>
<dbReference type="EMBL" id="BA000054">
    <property type="protein sequence ID" value="BAE63781.1"/>
    <property type="molecule type" value="Genomic_DNA"/>
</dbReference>
<dbReference type="RefSeq" id="XP_001824914.1">
    <property type="nucleotide sequence ID" value="XM_001824862.1"/>
</dbReference>
<dbReference type="SMR" id="Q2U3T4"/>
<dbReference type="STRING" id="510516.Q2U3T4"/>
<dbReference type="EnsemblFungi" id="BAE63781">
    <property type="protein sequence ID" value="BAE63781"/>
    <property type="gene ID" value="AO090020000626"/>
</dbReference>
<dbReference type="GeneID" id="5997000"/>
<dbReference type="KEGG" id="aor:AO090020000626"/>
<dbReference type="VEuPathDB" id="FungiDB:AO090020000626"/>
<dbReference type="HOGENOM" id="CLU_009995_3_1_1"/>
<dbReference type="OMA" id="QVKCDEN"/>
<dbReference type="OrthoDB" id="33570at5052"/>
<dbReference type="Proteomes" id="UP000006564">
    <property type="component" value="Chromosome 6"/>
</dbReference>
<dbReference type="GO" id="GO:0005743">
    <property type="term" value="C:mitochondrial inner membrane"/>
    <property type="evidence" value="ECO:0007669"/>
    <property type="project" value="UniProtKB-SubCell"/>
</dbReference>
<dbReference type="GO" id="GO:0005759">
    <property type="term" value="C:mitochondrial matrix"/>
    <property type="evidence" value="ECO:0007669"/>
    <property type="project" value="UniProtKB-UniRule"/>
</dbReference>
<dbReference type="GO" id="GO:0005525">
    <property type="term" value="F:GTP binding"/>
    <property type="evidence" value="ECO:0007669"/>
    <property type="project" value="UniProtKB-UniRule"/>
</dbReference>
<dbReference type="GO" id="GO:0003924">
    <property type="term" value="F:GTPase activity"/>
    <property type="evidence" value="ECO:0007669"/>
    <property type="project" value="UniProtKB-UniRule"/>
</dbReference>
<dbReference type="GO" id="GO:0097177">
    <property type="term" value="F:mitochondrial ribosome binding"/>
    <property type="evidence" value="ECO:0007669"/>
    <property type="project" value="EnsemblFungi"/>
</dbReference>
<dbReference type="GO" id="GO:0045727">
    <property type="term" value="P:positive regulation of translation"/>
    <property type="evidence" value="ECO:0007669"/>
    <property type="project" value="UniProtKB-UniRule"/>
</dbReference>
<dbReference type="GO" id="GO:0006412">
    <property type="term" value="P:translation"/>
    <property type="evidence" value="ECO:0007669"/>
    <property type="project" value="UniProtKB-KW"/>
</dbReference>
<dbReference type="CDD" id="cd03699">
    <property type="entry name" value="EF4_II"/>
    <property type="match status" value="1"/>
</dbReference>
<dbReference type="CDD" id="cd16260">
    <property type="entry name" value="EF4_III"/>
    <property type="match status" value="1"/>
</dbReference>
<dbReference type="CDD" id="cd01890">
    <property type="entry name" value="LepA"/>
    <property type="match status" value="1"/>
</dbReference>
<dbReference type="CDD" id="cd03709">
    <property type="entry name" value="lepA_C"/>
    <property type="match status" value="1"/>
</dbReference>
<dbReference type="FunFam" id="3.40.50.300:FF:000078">
    <property type="entry name" value="Elongation factor 4"/>
    <property type="match status" value="1"/>
</dbReference>
<dbReference type="FunFam" id="2.40.30.10:FF:000015">
    <property type="entry name" value="Translation factor GUF1, mitochondrial"/>
    <property type="match status" value="1"/>
</dbReference>
<dbReference type="FunFam" id="3.30.70.240:FF:000007">
    <property type="entry name" value="Translation factor GUF1, mitochondrial"/>
    <property type="match status" value="1"/>
</dbReference>
<dbReference type="FunFam" id="3.30.70.2570:FF:000001">
    <property type="entry name" value="Translation factor GUF1, mitochondrial"/>
    <property type="match status" value="1"/>
</dbReference>
<dbReference type="FunFam" id="3.30.70.870:FF:000004">
    <property type="entry name" value="Translation factor GUF1, mitochondrial"/>
    <property type="match status" value="1"/>
</dbReference>
<dbReference type="Gene3D" id="3.30.70.240">
    <property type="match status" value="1"/>
</dbReference>
<dbReference type="Gene3D" id="3.30.70.2570">
    <property type="entry name" value="Elongation factor 4, C-terminal domain"/>
    <property type="match status" value="1"/>
</dbReference>
<dbReference type="Gene3D" id="3.30.70.870">
    <property type="entry name" value="Elongation Factor G (Translational Gtpase), domain 3"/>
    <property type="match status" value="1"/>
</dbReference>
<dbReference type="Gene3D" id="3.40.50.300">
    <property type="entry name" value="P-loop containing nucleotide triphosphate hydrolases"/>
    <property type="match status" value="1"/>
</dbReference>
<dbReference type="Gene3D" id="2.40.30.10">
    <property type="entry name" value="Translation factors"/>
    <property type="match status" value="1"/>
</dbReference>
<dbReference type="HAMAP" id="MF_00071">
    <property type="entry name" value="LepA"/>
    <property type="match status" value="1"/>
</dbReference>
<dbReference type="InterPro" id="IPR006297">
    <property type="entry name" value="EF-4"/>
</dbReference>
<dbReference type="InterPro" id="IPR035647">
    <property type="entry name" value="EFG_III/V"/>
</dbReference>
<dbReference type="InterPro" id="IPR000640">
    <property type="entry name" value="EFG_V-like"/>
</dbReference>
<dbReference type="InterPro" id="IPR031157">
    <property type="entry name" value="G_TR_CS"/>
</dbReference>
<dbReference type="InterPro" id="IPR038363">
    <property type="entry name" value="LepA_C_sf"/>
</dbReference>
<dbReference type="InterPro" id="IPR013842">
    <property type="entry name" value="LepA_CTD"/>
</dbReference>
<dbReference type="InterPro" id="IPR035654">
    <property type="entry name" value="LepA_IV"/>
</dbReference>
<dbReference type="InterPro" id="IPR027417">
    <property type="entry name" value="P-loop_NTPase"/>
</dbReference>
<dbReference type="InterPro" id="IPR005225">
    <property type="entry name" value="Small_GTP-bd"/>
</dbReference>
<dbReference type="InterPro" id="IPR000795">
    <property type="entry name" value="T_Tr_GTP-bd_dom"/>
</dbReference>
<dbReference type="InterPro" id="IPR009000">
    <property type="entry name" value="Transl_B-barrel_sf"/>
</dbReference>
<dbReference type="NCBIfam" id="TIGR01393">
    <property type="entry name" value="lepA"/>
    <property type="match status" value="1"/>
</dbReference>
<dbReference type="NCBIfam" id="TIGR00231">
    <property type="entry name" value="small_GTP"/>
    <property type="match status" value="1"/>
</dbReference>
<dbReference type="PANTHER" id="PTHR43512:SF7">
    <property type="entry name" value="TRANSLATION FACTOR GUF1, MITOCHONDRIAL"/>
    <property type="match status" value="1"/>
</dbReference>
<dbReference type="PANTHER" id="PTHR43512">
    <property type="entry name" value="TRANSLATION FACTOR GUF1-RELATED"/>
    <property type="match status" value="1"/>
</dbReference>
<dbReference type="Pfam" id="PF00679">
    <property type="entry name" value="EFG_C"/>
    <property type="match status" value="1"/>
</dbReference>
<dbReference type="Pfam" id="PF00009">
    <property type="entry name" value="GTP_EFTU"/>
    <property type="match status" value="1"/>
</dbReference>
<dbReference type="Pfam" id="PF06421">
    <property type="entry name" value="LepA_C"/>
    <property type="match status" value="1"/>
</dbReference>
<dbReference type="PRINTS" id="PR00315">
    <property type="entry name" value="ELONGATNFCT"/>
</dbReference>
<dbReference type="SUPFAM" id="SSF54980">
    <property type="entry name" value="EF-G C-terminal domain-like"/>
    <property type="match status" value="2"/>
</dbReference>
<dbReference type="SUPFAM" id="SSF52540">
    <property type="entry name" value="P-loop containing nucleoside triphosphate hydrolases"/>
    <property type="match status" value="1"/>
</dbReference>
<dbReference type="SUPFAM" id="SSF50447">
    <property type="entry name" value="Translation proteins"/>
    <property type="match status" value="1"/>
</dbReference>
<dbReference type="PROSITE" id="PS00301">
    <property type="entry name" value="G_TR_1"/>
    <property type="match status" value="1"/>
</dbReference>
<dbReference type="PROSITE" id="PS51722">
    <property type="entry name" value="G_TR_2"/>
    <property type="match status" value="1"/>
</dbReference>
<reference key="1">
    <citation type="journal article" date="2005" name="Nature">
        <title>Genome sequencing and analysis of Aspergillus oryzae.</title>
        <authorList>
            <person name="Machida M."/>
            <person name="Asai K."/>
            <person name="Sano M."/>
            <person name="Tanaka T."/>
            <person name="Kumagai T."/>
            <person name="Terai G."/>
            <person name="Kusumoto K."/>
            <person name="Arima T."/>
            <person name="Akita O."/>
            <person name="Kashiwagi Y."/>
            <person name="Abe K."/>
            <person name="Gomi K."/>
            <person name="Horiuchi H."/>
            <person name="Kitamoto K."/>
            <person name="Kobayashi T."/>
            <person name="Takeuchi M."/>
            <person name="Denning D.W."/>
            <person name="Galagan J.E."/>
            <person name="Nierman W.C."/>
            <person name="Yu J."/>
            <person name="Archer D.B."/>
            <person name="Bennett J.W."/>
            <person name="Bhatnagar D."/>
            <person name="Cleveland T.E."/>
            <person name="Fedorova N.D."/>
            <person name="Gotoh O."/>
            <person name="Horikawa H."/>
            <person name="Hosoyama A."/>
            <person name="Ichinomiya M."/>
            <person name="Igarashi R."/>
            <person name="Iwashita K."/>
            <person name="Juvvadi P.R."/>
            <person name="Kato M."/>
            <person name="Kato Y."/>
            <person name="Kin T."/>
            <person name="Kokubun A."/>
            <person name="Maeda H."/>
            <person name="Maeyama N."/>
            <person name="Maruyama J."/>
            <person name="Nagasaki H."/>
            <person name="Nakajima T."/>
            <person name="Oda K."/>
            <person name="Okada K."/>
            <person name="Paulsen I."/>
            <person name="Sakamoto K."/>
            <person name="Sawano T."/>
            <person name="Takahashi M."/>
            <person name="Takase K."/>
            <person name="Terabayashi Y."/>
            <person name="Wortman J.R."/>
            <person name="Yamada O."/>
            <person name="Yamagata Y."/>
            <person name="Anazawa H."/>
            <person name="Hata Y."/>
            <person name="Koide Y."/>
            <person name="Komori T."/>
            <person name="Koyama Y."/>
            <person name="Minetoki T."/>
            <person name="Suharnan S."/>
            <person name="Tanaka A."/>
            <person name="Isono K."/>
            <person name="Kuhara S."/>
            <person name="Ogasawara N."/>
            <person name="Kikuchi H."/>
        </authorList>
    </citation>
    <scope>NUCLEOTIDE SEQUENCE [LARGE SCALE GENOMIC DNA]</scope>
    <source>
        <strain>ATCC 42149 / RIB 40</strain>
    </source>
</reference>
<keyword id="KW-0342">GTP-binding</keyword>
<keyword id="KW-0378">Hydrolase</keyword>
<keyword id="KW-0472">Membrane</keyword>
<keyword id="KW-0496">Mitochondrion</keyword>
<keyword id="KW-0999">Mitochondrion inner membrane</keyword>
<keyword id="KW-0547">Nucleotide-binding</keyword>
<keyword id="KW-0648">Protein biosynthesis</keyword>
<keyword id="KW-1185">Reference proteome</keyword>
<keyword id="KW-0809">Transit peptide</keyword>
<gene>
    <name type="primary">guf1</name>
    <name type="ORF">AO090020000626</name>
</gene>
<name>GUF1_ASPOR</name>
<organism>
    <name type="scientific">Aspergillus oryzae (strain ATCC 42149 / RIB 40)</name>
    <name type="common">Yellow koji mold</name>
    <dbReference type="NCBI Taxonomy" id="510516"/>
    <lineage>
        <taxon>Eukaryota</taxon>
        <taxon>Fungi</taxon>
        <taxon>Dikarya</taxon>
        <taxon>Ascomycota</taxon>
        <taxon>Pezizomycotina</taxon>
        <taxon>Eurotiomycetes</taxon>
        <taxon>Eurotiomycetidae</taxon>
        <taxon>Eurotiales</taxon>
        <taxon>Aspergillaceae</taxon>
        <taxon>Aspergillus</taxon>
        <taxon>Aspergillus subgen. Circumdati</taxon>
    </lineage>
</organism>
<evidence type="ECO:0000255" key="1">
    <source>
        <dbReference type="HAMAP-Rule" id="MF_03137"/>
    </source>
</evidence>
<evidence type="ECO:0000305" key="2"/>
<accession>Q2U3T4</accession>
<sequence>MRGCLQLARWLSAGPKCPAASLPKAPSGLYNTIRSFTSSAQLASRARAASKPASDLETRIAQIPIDRYRNFCIVAHVDHGKSTLSDRLLELTGTIQPGSNKQVLDKLDVERERGITVKAQTCTMIYNHNGEDYLLHLVDTPGHVDFRAEVSRSYASCGGALLLVDASQGIQAQTVANFYLAFAQGLELIPVINKVDLPSAEPEKALQQMKTSFELDTENAVMVSAKTGLNVEQLLPTVVEKIPAPVGDTQKPLRMLLVDSWYDSYKGVICLVRIFDGEVRAGDQLVSFATGIKYYVGEVGIMYPTETSQTVLRAGQVGYIFFNPGMKRSQEAKIGDTYTKVGSEKAVEPLPGFEEPKAMVFVAAYPVDADHFEHLEDSINQLMLNDRSITVQKESSEALGAGFRLGFLGTLHCSVFEDRLRQEHGASIIITPPSVPVKVMWKDGREEIVTSPARFPEEDDLRSKVAEIHEPYVLATLTFPDEYLGKVIELCEANRGVQQTLEYFTSTQVILKYELPLAQLVDDFFGKLKGSTKGYATLDYEESAWQPSNIVKLQLLVNKAPVDAVARVVHYSQIERLGRKWVTKFKQHVDRQLFEVVIQAAVGRKVIARETVKPYRKDVLAKLHASDVSRRRKLLEKQKEGRKRLRAVGNVVIEQKAFQNFLAK</sequence>
<proteinExistence type="inferred from homology"/>